<name>INUE_ASPNG</name>
<proteinExistence type="evidence at protein level"/>
<comment type="function">
    <text evidence="4">Exo-inulinase involved in utilization of the plant storage polymer inulin, consisting of fructooligosaccharides with a degree of polymerization (DP) value from 2 to 60. Splits off terminal fructose units successively from the non-reducing end of the inulin molecule, and also hydrolyze sucrose and raffinose.</text>
</comment>
<comment type="catalytic activity">
    <reaction evidence="4">
        <text>Hydrolysis of terminal, non-reducing (2-&gt;1)- and (2-&gt;6)-linked beta-D-fructofuranose residues in fructans.</text>
        <dbReference type="EC" id="3.2.1.80"/>
    </reaction>
</comment>
<comment type="biophysicochemical properties">
    <kinetics>
        <KM evidence="4">3 mM for inulin</KM>
        <KM evidence="4">111 mM for sucrose</KM>
    </kinetics>
    <phDependence>
        <text evidence="4">Optimum pH is 4.0.</text>
    </phDependence>
    <temperatureDependence>
        <text evidence="4">Optimum temperature is 60 degrees Celsius.</text>
    </temperatureDependence>
</comment>
<comment type="subcellular location">
    <subcellularLocation>
        <location evidence="3">Secreted</location>
    </subcellularLocation>
</comment>
<comment type="similarity">
    <text evidence="5">Belongs to the glycosyl hydrolase 32 family.</text>
</comment>
<gene>
    <name type="primary">inuE</name>
</gene>
<keyword id="KW-0119">Carbohydrate metabolism</keyword>
<keyword id="KW-0325">Glycoprotein</keyword>
<keyword id="KW-0326">Glycosidase</keyword>
<keyword id="KW-0378">Hydrolase</keyword>
<keyword id="KW-0624">Polysaccharide degradation</keyword>
<keyword id="KW-0964">Secreted</keyword>
<keyword id="KW-0732">Signal</keyword>
<sequence length="537" mass="59143">MARLLKAVTVCALAGIAHAFNYDQPYRGQYHFSPQKNWMNDPNGLLYHNGTYHLFFQYNPGGIEWGNISWGHATSEDLTHWEEQPVALLARGYGSDVTEMYFSGSAVADVNNTSGFGKDGKTPLVAMYTSYYPVAQTLPSGQTVQEDQQSQSIAYSLDDGLTWTTYDAANPVIPNPPQPYQAQYQNFRDPFVFWHDESHKWVVVTSIAELHKLAIYTSDNLKDWKLVSEFGPYNAQGGVWECPGLFKLPLDGGSSTKWVITSGLNPGGPPGTVGSGTQYFVGEFDGTTFTPDADTVYPGNSTANWMDWGPDFYAAAGYNGLSIKDHVHIGWMNNWQYGANIPTYPWRSAMAIPRHLALKTINNKTTLVQQPQEAWSSISSKHPLYSRTYSTFSEGSTNASTTGETFRVDLSFSATSKASTFAIALRASANFTEQTLAGYDFAKQQIFLDRTKSGDVSFDNTFASVYHGPLVPDSTGMVRLSIFVDRSSVEVFGGQGETTLTAQIFPSNDAVHARLVSTGGATEDVRVDVHNITSTWN</sequence>
<dbReference type="EC" id="3.2.1.80"/>
<dbReference type="EMBL" id="AB100243">
    <property type="protein sequence ID" value="BAD01476.1"/>
    <property type="molecule type" value="Genomic_DNA"/>
</dbReference>
<dbReference type="SMR" id="Q76HP6"/>
<dbReference type="CAZy" id="GH32">
    <property type="family name" value="Glycoside Hydrolase Family 32"/>
</dbReference>
<dbReference type="GlyCosmos" id="Q76HP6">
    <property type="glycosylation" value="8 sites, No reported glycans"/>
</dbReference>
<dbReference type="PaxDb" id="5061-CADANGAP00010061"/>
<dbReference type="VEuPathDB" id="FungiDB:An12g08280"/>
<dbReference type="VEuPathDB" id="FungiDB:ASPNIDRAFT2_1183203"/>
<dbReference type="VEuPathDB" id="FungiDB:ATCC64974_34960"/>
<dbReference type="VEuPathDB" id="FungiDB:M747DRAFT_257211"/>
<dbReference type="eggNOG" id="KOG0228">
    <property type="taxonomic scope" value="Eukaryota"/>
</dbReference>
<dbReference type="OrthoDB" id="202537at2759"/>
<dbReference type="GO" id="GO:0005737">
    <property type="term" value="C:cytoplasm"/>
    <property type="evidence" value="ECO:0007669"/>
    <property type="project" value="TreeGrafter"/>
</dbReference>
<dbReference type="GO" id="GO:0005576">
    <property type="term" value="C:extracellular region"/>
    <property type="evidence" value="ECO:0007669"/>
    <property type="project" value="UniProtKB-SubCell"/>
</dbReference>
<dbReference type="GO" id="GO:0051669">
    <property type="term" value="F:fructan beta-fructosidase activity"/>
    <property type="evidence" value="ECO:0007669"/>
    <property type="project" value="UniProtKB-EC"/>
</dbReference>
<dbReference type="GO" id="GO:0004575">
    <property type="term" value="F:sucrose alpha-glucosidase activity"/>
    <property type="evidence" value="ECO:0007669"/>
    <property type="project" value="TreeGrafter"/>
</dbReference>
<dbReference type="GO" id="GO:0000272">
    <property type="term" value="P:polysaccharide catabolic process"/>
    <property type="evidence" value="ECO:0007669"/>
    <property type="project" value="UniProtKB-KW"/>
</dbReference>
<dbReference type="GO" id="GO:0005987">
    <property type="term" value="P:sucrose catabolic process"/>
    <property type="evidence" value="ECO:0007669"/>
    <property type="project" value="TreeGrafter"/>
</dbReference>
<dbReference type="CDD" id="cd18622">
    <property type="entry name" value="GH32_Inu-like"/>
    <property type="match status" value="1"/>
</dbReference>
<dbReference type="FunFam" id="2.60.120.560:FF:000003">
    <property type="entry name" value="Extracellular exo-inulinase inuE"/>
    <property type="match status" value="1"/>
</dbReference>
<dbReference type="FunFam" id="2.115.10.20:FF:000002">
    <property type="entry name" value="Invertase 2"/>
    <property type="match status" value="1"/>
</dbReference>
<dbReference type="Gene3D" id="2.60.120.560">
    <property type="entry name" value="Exo-inulinase, domain 1"/>
    <property type="match status" value="1"/>
</dbReference>
<dbReference type="Gene3D" id="2.115.10.20">
    <property type="entry name" value="Glycosyl hydrolase domain, family 43"/>
    <property type="match status" value="1"/>
</dbReference>
<dbReference type="InterPro" id="IPR013320">
    <property type="entry name" value="ConA-like_dom_sf"/>
</dbReference>
<dbReference type="InterPro" id="IPR001362">
    <property type="entry name" value="Glyco_hydro_32"/>
</dbReference>
<dbReference type="InterPro" id="IPR018053">
    <property type="entry name" value="Glyco_hydro_32_AS"/>
</dbReference>
<dbReference type="InterPro" id="IPR013189">
    <property type="entry name" value="Glyco_hydro_32_C"/>
</dbReference>
<dbReference type="InterPro" id="IPR013148">
    <property type="entry name" value="Glyco_hydro_32_N"/>
</dbReference>
<dbReference type="InterPro" id="IPR023296">
    <property type="entry name" value="Glyco_hydro_beta-prop_sf"/>
</dbReference>
<dbReference type="PANTHER" id="PTHR42800">
    <property type="entry name" value="EXOINULINASE INUD (AFU_ORTHOLOGUE AFUA_5G00480)"/>
    <property type="match status" value="1"/>
</dbReference>
<dbReference type="PANTHER" id="PTHR42800:SF1">
    <property type="entry name" value="EXOINULINASE INUD (AFU_ORTHOLOGUE AFUA_5G00480)"/>
    <property type="match status" value="1"/>
</dbReference>
<dbReference type="Pfam" id="PF08244">
    <property type="entry name" value="Glyco_hydro_32C"/>
    <property type="match status" value="1"/>
</dbReference>
<dbReference type="Pfam" id="PF00251">
    <property type="entry name" value="Glyco_hydro_32N"/>
    <property type="match status" value="1"/>
</dbReference>
<dbReference type="SMART" id="SM00640">
    <property type="entry name" value="Glyco_32"/>
    <property type="match status" value="1"/>
</dbReference>
<dbReference type="SUPFAM" id="SSF75005">
    <property type="entry name" value="Arabinanase/levansucrase/invertase"/>
    <property type="match status" value="1"/>
</dbReference>
<dbReference type="SUPFAM" id="SSF49899">
    <property type="entry name" value="Concanavalin A-like lectins/glucanases"/>
    <property type="match status" value="1"/>
</dbReference>
<dbReference type="PROSITE" id="PS00609">
    <property type="entry name" value="GLYCOSYL_HYDROL_F32"/>
    <property type="match status" value="1"/>
</dbReference>
<accession>Q76HP6</accession>
<organism>
    <name type="scientific">Aspergillus niger</name>
    <dbReference type="NCBI Taxonomy" id="5061"/>
    <lineage>
        <taxon>Eukaryota</taxon>
        <taxon>Fungi</taxon>
        <taxon>Dikarya</taxon>
        <taxon>Ascomycota</taxon>
        <taxon>Pezizomycotina</taxon>
        <taxon>Eurotiomycetes</taxon>
        <taxon>Eurotiomycetidae</taxon>
        <taxon>Eurotiales</taxon>
        <taxon>Aspergillaceae</taxon>
        <taxon>Aspergillus</taxon>
        <taxon>Aspergillus subgen. Circumdati</taxon>
    </lineage>
</organism>
<evidence type="ECO:0000255" key="1"/>
<evidence type="ECO:0000255" key="2">
    <source>
        <dbReference type="PROSITE-ProRule" id="PRU10067"/>
    </source>
</evidence>
<evidence type="ECO:0000269" key="3">
    <source>
    </source>
</evidence>
<evidence type="ECO:0000269" key="4">
    <source>
    </source>
</evidence>
<evidence type="ECO:0000305" key="5"/>
<reference key="1">
    <citation type="journal article" date="2003" name="J. Biosci. Bioeng.">
        <title>Molecular cloning and characterization of an exoinulinase gene from Aspergillus niger strain 12 and its expression in Pichia pastoris.</title>
        <authorList>
            <person name="Moriyama S."/>
            <person name="Tanaka H."/>
            <person name="Uwataki M."/>
            <person name="Muguruma M."/>
            <person name="Ohta K."/>
        </authorList>
    </citation>
    <scope>NUCLEOTIDE SEQUENCE [GENOMIC DNA]</scope>
    <scope>SUBCELLULAR LOCATION</scope>
    <source>
        <strain>12</strain>
    </source>
</reference>
<reference key="2">
    <citation type="journal article" date="2007" name="J. Biosci. Bioeng.">
        <title>Functional characterization and evolutionary implication of the internal 157-amino-acid sequence of an exoinulinase from Penicillium sp. strain TN-88.</title>
        <authorList>
            <person name="Moriyama S."/>
            <person name="Ohta K."/>
        </authorList>
    </citation>
    <scope>FUNCTION</scope>
    <scope>CATALYTIC ACTIVITY</scope>
    <scope>BIOPHYSICOCHEMICAL PROPERTIES</scope>
    <source>
        <strain>12</strain>
    </source>
</reference>
<protein>
    <recommendedName>
        <fullName>Extracellular exo-inulinase inuE</fullName>
        <ecNumber>3.2.1.80</ecNumber>
    </recommendedName>
</protein>
<feature type="signal peptide" evidence="1">
    <location>
        <begin position="1"/>
        <end position="19"/>
    </location>
</feature>
<feature type="chain" id="PRO_0000429405" description="Extracellular exo-inulinase inuE">
    <location>
        <begin position="20"/>
        <end position="537"/>
    </location>
</feature>
<feature type="active site" evidence="2">
    <location>
        <position position="41"/>
    </location>
</feature>
<feature type="glycosylation site" description="N-linked (GlcNAc...) asparagine" evidence="1">
    <location>
        <position position="49"/>
    </location>
</feature>
<feature type="glycosylation site" description="N-linked (GlcNAc...) asparagine" evidence="1">
    <location>
        <position position="67"/>
    </location>
</feature>
<feature type="glycosylation site" description="N-linked (GlcNAc...) asparagine" evidence="1">
    <location>
        <position position="112"/>
    </location>
</feature>
<feature type="glycosylation site" description="N-linked (GlcNAc...) asparagine" evidence="1">
    <location>
        <position position="300"/>
    </location>
</feature>
<feature type="glycosylation site" description="N-linked (GlcNAc...) asparagine" evidence="1">
    <location>
        <position position="363"/>
    </location>
</feature>
<feature type="glycosylation site" description="N-linked (GlcNAc...) asparagine" evidence="1">
    <location>
        <position position="398"/>
    </location>
</feature>
<feature type="glycosylation site" description="N-linked (GlcNAc...) asparagine" evidence="1">
    <location>
        <position position="430"/>
    </location>
</feature>
<feature type="glycosylation site" description="N-linked (GlcNAc...) asparagine" evidence="1">
    <location>
        <position position="531"/>
    </location>
</feature>